<proteinExistence type="evidence at protein level"/>
<feature type="chain" id="PRO_0000167655" description="Benzoate 1,2-dioxygenase electron transfer component">
    <location>
        <begin position="1"/>
        <end position="348"/>
    </location>
</feature>
<feature type="domain" description="2Fe-2S ferredoxin-type" evidence="2">
    <location>
        <begin position="14"/>
        <end position="109"/>
    </location>
</feature>
<feature type="domain" description="FAD-binding FR-type" evidence="3">
    <location>
        <begin position="116"/>
        <end position="217"/>
    </location>
</feature>
<feature type="region of interest" description="Ferredoxin-reductase">
    <location>
        <begin position="111"/>
        <end position="348"/>
    </location>
</feature>
<feature type="binding site" evidence="2">
    <location>
        <position position="51"/>
    </location>
    <ligand>
        <name>[2Fe-2S] cluster</name>
        <dbReference type="ChEBI" id="CHEBI:190135"/>
    </ligand>
</feature>
<feature type="binding site" evidence="2">
    <location>
        <position position="56"/>
    </location>
    <ligand>
        <name>[2Fe-2S] cluster</name>
        <dbReference type="ChEBI" id="CHEBI:190135"/>
    </ligand>
</feature>
<feature type="binding site" evidence="2">
    <location>
        <position position="59"/>
    </location>
    <ligand>
        <name>[2Fe-2S] cluster</name>
        <dbReference type="ChEBI" id="CHEBI:190135"/>
    </ligand>
</feature>
<feature type="binding site" evidence="2">
    <location>
        <position position="93"/>
    </location>
    <ligand>
        <name>[2Fe-2S] cluster</name>
        <dbReference type="ChEBI" id="CHEBI:190135"/>
    </ligand>
</feature>
<feature type="sequence conflict" description="In Ref. 1; AAC46438." evidence="4" ref="1">
    <original>R</original>
    <variation>C</variation>
    <location>
        <position position="29"/>
    </location>
</feature>
<feature type="sequence conflict" description="In Ref. 1; AAC46438." evidence="4" ref="1">
    <original>A</original>
    <variation>E</variation>
    <location>
        <position position="55"/>
    </location>
</feature>
<feature type="strand" evidence="5">
    <location>
        <begin position="14"/>
        <end position="19"/>
    </location>
</feature>
<feature type="strand" evidence="5">
    <location>
        <begin position="25"/>
        <end position="30"/>
    </location>
</feature>
<feature type="helix" evidence="5">
    <location>
        <begin position="36"/>
        <end position="42"/>
    </location>
</feature>
<feature type="strand" evidence="5">
    <location>
        <begin position="52"/>
        <end position="56"/>
    </location>
</feature>
<feature type="strand" evidence="5">
    <location>
        <begin position="60"/>
        <end position="65"/>
    </location>
</feature>
<feature type="helix" evidence="5">
    <location>
        <begin position="72"/>
        <end position="74"/>
    </location>
</feature>
<feature type="turn" evidence="5">
    <location>
        <begin position="77"/>
        <end position="79"/>
    </location>
</feature>
<feature type="helix" evidence="5">
    <location>
        <begin position="82"/>
        <end position="87"/>
    </location>
</feature>
<feature type="strand" evidence="5">
    <location>
        <begin position="89"/>
        <end position="91"/>
    </location>
</feature>
<feature type="turn" evidence="5">
    <location>
        <begin position="92"/>
        <end position="94"/>
    </location>
</feature>
<feature type="strand" evidence="5">
    <location>
        <begin position="96"/>
        <end position="107"/>
    </location>
</feature>
<feature type="helix" evidence="5">
    <location>
        <begin position="111"/>
        <end position="113"/>
    </location>
</feature>
<feature type="strand" evidence="5">
    <location>
        <begin position="117"/>
        <end position="140"/>
    </location>
</feature>
<feature type="strand" evidence="5">
    <location>
        <begin position="154"/>
        <end position="158"/>
    </location>
</feature>
<feature type="strand" evidence="5">
    <location>
        <begin position="165"/>
        <end position="169"/>
    </location>
</feature>
<feature type="strand" evidence="5">
    <location>
        <begin position="177"/>
        <end position="184"/>
    </location>
</feature>
<feature type="helix" evidence="5">
    <location>
        <begin position="190"/>
        <end position="196"/>
    </location>
</feature>
<feature type="strand" evidence="5">
    <location>
        <begin position="204"/>
        <end position="211"/>
    </location>
</feature>
<feature type="strand" evidence="5">
    <location>
        <begin position="223"/>
        <end position="228"/>
    </location>
</feature>
<feature type="helix" evidence="5">
    <location>
        <begin position="229"/>
        <end position="231"/>
    </location>
</feature>
<feature type="helix" evidence="5">
    <location>
        <begin position="232"/>
        <end position="245"/>
    </location>
</feature>
<feature type="strand" evidence="5">
    <location>
        <begin position="251"/>
        <end position="259"/>
    </location>
</feature>
<feature type="helix" evidence="5">
    <location>
        <begin position="260"/>
        <end position="262"/>
    </location>
</feature>
<feature type="helix" evidence="5">
    <location>
        <begin position="266"/>
        <end position="275"/>
    </location>
</feature>
<feature type="strand" evidence="5">
    <location>
        <begin position="279"/>
        <end position="285"/>
    </location>
</feature>
<feature type="strand" evidence="5">
    <location>
        <begin position="290"/>
        <end position="296"/>
    </location>
</feature>
<feature type="helix" evidence="5">
    <location>
        <begin position="299"/>
        <end position="301"/>
    </location>
</feature>
<feature type="helix" evidence="5">
    <location>
        <begin position="304"/>
        <end position="310"/>
    </location>
</feature>
<feature type="strand" evidence="5">
    <location>
        <begin position="312"/>
        <end position="319"/>
    </location>
</feature>
<feature type="helix" evidence="5">
    <location>
        <begin position="320"/>
        <end position="333"/>
    </location>
</feature>
<feature type="strand" evidence="5">
    <location>
        <begin position="338"/>
        <end position="345"/>
    </location>
</feature>
<name>BENC_ACIAD</name>
<accession>P07771</accession>
<accession>Q6FCA9</accession>
<comment type="function">
    <text>Electron transfer component of benzoate 1,2-dioxygenase system.</text>
</comment>
<comment type="catalytic activity">
    <reaction>
        <text>2 reduced [2Fe-2S]-[ferredoxin] + NAD(+) + H(+) = 2 oxidized [2Fe-2S]-[ferredoxin] + NADH</text>
        <dbReference type="Rhea" id="RHEA:16521"/>
        <dbReference type="Rhea" id="RHEA-COMP:10000"/>
        <dbReference type="Rhea" id="RHEA-COMP:10001"/>
        <dbReference type="ChEBI" id="CHEBI:15378"/>
        <dbReference type="ChEBI" id="CHEBI:33737"/>
        <dbReference type="ChEBI" id="CHEBI:33738"/>
        <dbReference type="ChEBI" id="CHEBI:57540"/>
        <dbReference type="ChEBI" id="CHEBI:57945"/>
        <dbReference type="EC" id="1.18.1.3"/>
    </reaction>
</comment>
<comment type="cofactor">
    <cofactor>
        <name>FAD</name>
        <dbReference type="ChEBI" id="CHEBI:57692"/>
    </cofactor>
</comment>
<comment type="cofactor">
    <cofactor evidence="1">
        <name>[2Fe-2S] cluster</name>
        <dbReference type="ChEBI" id="CHEBI:190135"/>
    </cofactor>
    <text evidence="1">Binds 1 [2Fe-2S] cluster per subunit.</text>
</comment>
<comment type="pathway">
    <text>Xenobiotic degradation; toluene degradation.</text>
</comment>
<comment type="subunit">
    <text>This dioxygenase system consists of three proteins: the two subunits of the hydroxylase component (BenA and BenB), and an electron transfer component (BenC).</text>
</comment>
<comment type="similarity">
    <text evidence="4">Belongs to the bacterial ring-hydroxylating dioxygenase ferredoxin reductase family.</text>
</comment>
<comment type="caution">
    <text evidence="4">It is uncertain whether Met-1 or Met-11 is the initiator.</text>
</comment>
<evidence type="ECO:0000250" key="1"/>
<evidence type="ECO:0000255" key="2">
    <source>
        <dbReference type="PROSITE-ProRule" id="PRU00465"/>
    </source>
</evidence>
<evidence type="ECO:0000255" key="3">
    <source>
        <dbReference type="PROSITE-ProRule" id="PRU00716"/>
    </source>
</evidence>
<evidence type="ECO:0000305" key="4"/>
<evidence type="ECO:0007829" key="5">
    <source>
        <dbReference type="PDB" id="1KRH"/>
    </source>
</evidence>
<gene>
    <name type="primary">benC</name>
    <name type="ordered locus">ACIAD1438</name>
</gene>
<protein>
    <recommendedName>
        <fullName>Benzoate 1,2-dioxygenase electron transfer component</fullName>
    </recommendedName>
    <domain>
        <recommendedName>
            <fullName>Ferredoxin</fullName>
        </recommendedName>
    </domain>
    <domain>
        <recommendedName>
            <fullName>Ferredoxin--NAD(+) reductase</fullName>
            <ecNumber>1.18.1.3</ecNumber>
        </recommendedName>
    </domain>
</protein>
<reference key="1">
    <citation type="journal article" date="1991" name="J. Bacteriol.">
        <title>Nucleotide sequences of the Acinetobacter calcoaceticus benABC genes for benzoate 1,2-dioxygenase reveal evolutionary relationships among multicomponent oxygenases.</title>
        <authorList>
            <person name="Neidle E.L."/>
            <person name="Hartnett C."/>
            <person name="Ornston N.L."/>
            <person name="Bairoch A."/>
            <person name="Rekik M."/>
            <person name="Harayama S."/>
        </authorList>
    </citation>
    <scope>NUCLEOTIDE SEQUENCE [GENOMIC DNA]</scope>
</reference>
<reference key="2">
    <citation type="journal article" date="2004" name="Nucleic Acids Res.">
        <title>Unique features revealed by the genome sequence of Acinetobacter sp. ADP1, a versatile and naturally transformation competent bacterium.</title>
        <authorList>
            <person name="Barbe V."/>
            <person name="Vallenet D."/>
            <person name="Fonknechten N."/>
            <person name="Kreimeyer A."/>
            <person name="Oztas S."/>
            <person name="Labarre L."/>
            <person name="Cruveiller S."/>
            <person name="Robert C."/>
            <person name="Duprat S."/>
            <person name="Wincker P."/>
            <person name="Ornston L.N."/>
            <person name="Weissenbach J."/>
            <person name="Marliere P."/>
            <person name="Cohen G.N."/>
            <person name="Medigue C."/>
        </authorList>
    </citation>
    <scope>NUCLEOTIDE SEQUENCE [LARGE SCALE GENOMIC DNA]</scope>
    <source>
        <strain>ATCC 33305 / BD413 / ADP1</strain>
    </source>
</reference>
<keyword id="KW-0001">2Fe-2S</keyword>
<keyword id="KW-0002">3D-structure</keyword>
<keyword id="KW-0058">Aromatic hydrocarbons catabolism</keyword>
<keyword id="KW-0274">FAD</keyword>
<keyword id="KW-0285">Flavoprotein</keyword>
<keyword id="KW-0408">Iron</keyword>
<keyword id="KW-0411">Iron-sulfur</keyword>
<keyword id="KW-0479">Metal-binding</keyword>
<keyword id="KW-0520">NAD</keyword>
<keyword id="KW-0560">Oxidoreductase</keyword>
<sequence length="348" mass="38783">MSLYLNRIPAMSNHQVALQFEDGVTRFIRIAQGETLSDAAYRQQINIPMDCREGACGTCRAFCESGNYDMPEDNYIEDALTPEEAQQGYVLACQCRPTSDAVFQIQASSEVCKTKIHHFEGTLARVENLSDSTITFDIQLDDGQPDIHFLAGQYVNVTLPGTTETRSYSFSSQPGNRLTGFVVRNVPQGKMSEYLSVQAKAGDKMSFTGPFGSFYLRDVKRPVLMLAGGTGIAPFLSMLQVLEQKGSEHPVRLVFGVTQDCDLVALEQLDALQQKLPWFEYRTVVAHAESQHERKGYVTGHIEYDWLNGGEVDVYLCGPVPMVEAVRSWLDTQGIQPANFLFEKFSAN</sequence>
<dbReference type="EC" id="1.18.1.3"/>
<dbReference type="EMBL" id="AF009224">
    <property type="protein sequence ID" value="AAC46438.1"/>
    <property type="molecule type" value="Genomic_DNA"/>
</dbReference>
<dbReference type="EMBL" id="CR543861">
    <property type="protein sequence ID" value="CAG68302.1"/>
    <property type="molecule type" value="Genomic_DNA"/>
</dbReference>
<dbReference type="PIR" id="S23479">
    <property type="entry name" value="S23479"/>
</dbReference>
<dbReference type="PDB" id="1KRH">
    <property type="method" value="X-ray"/>
    <property type="resolution" value="1.50 A"/>
    <property type="chains" value="A/B=11-348"/>
</dbReference>
<dbReference type="PDBsum" id="1KRH"/>
<dbReference type="SMR" id="P07771"/>
<dbReference type="STRING" id="202950.GCA_001485005_01193"/>
<dbReference type="DrugBank" id="DB03147">
    <property type="generic name" value="Flavin adenine dinucleotide"/>
</dbReference>
<dbReference type="KEGG" id="aci:ACIAD1438"/>
<dbReference type="eggNOG" id="COG0543">
    <property type="taxonomic scope" value="Bacteria"/>
</dbReference>
<dbReference type="eggNOG" id="COG0633">
    <property type="taxonomic scope" value="Bacteria"/>
</dbReference>
<dbReference type="HOGENOM" id="CLU_003827_7_0_6"/>
<dbReference type="UniPathway" id="UPA00273"/>
<dbReference type="EvolutionaryTrace" id="P07771"/>
<dbReference type="Proteomes" id="UP000000430">
    <property type="component" value="Chromosome"/>
</dbReference>
<dbReference type="GO" id="GO:0051537">
    <property type="term" value="F:2 iron, 2 sulfur cluster binding"/>
    <property type="evidence" value="ECO:0007669"/>
    <property type="project" value="UniProtKB-KW"/>
</dbReference>
<dbReference type="GO" id="GO:0008860">
    <property type="term" value="F:ferredoxin-NAD+ reductase activity"/>
    <property type="evidence" value="ECO:0007669"/>
    <property type="project" value="UniProtKB-EC"/>
</dbReference>
<dbReference type="GO" id="GO:0046872">
    <property type="term" value="F:metal ion binding"/>
    <property type="evidence" value="ECO:0007669"/>
    <property type="project" value="UniProtKB-KW"/>
</dbReference>
<dbReference type="GO" id="GO:0042203">
    <property type="term" value="P:toluene catabolic process"/>
    <property type="evidence" value="ECO:0007669"/>
    <property type="project" value="UniProtKB-UniPathway"/>
</dbReference>
<dbReference type="CDD" id="cd06209">
    <property type="entry name" value="BenDO_FAD_NAD"/>
    <property type="match status" value="1"/>
</dbReference>
<dbReference type="CDD" id="cd00207">
    <property type="entry name" value="fer2"/>
    <property type="match status" value="1"/>
</dbReference>
<dbReference type="Gene3D" id="3.10.20.30">
    <property type="match status" value="1"/>
</dbReference>
<dbReference type="Gene3D" id="3.40.50.80">
    <property type="entry name" value="Nucleotide-binding domain of ferredoxin-NADP reductase (FNR) module"/>
    <property type="match status" value="1"/>
</dbReference>
<dbReference type="Gene3D" id="2.40.30.10">
    <property type="entry name" value="Translation factors"/>
    <property type="match status" value="1"/>
</dbReference>
<dbReference type="InterPro" id="IPR036010">
    <property type="entry name" value="2Fe-2S_ferredoxin-like_sf"/>
</dbReference>
<dbReference type="InterPro" id="IPR001041">
    <property type="entry name" value="2Fe-2S_ferredoxin-type"/>
</dbReference>
<dbReference type="InterPro" id="IPR006058">
    <property type="entry name" value="2Fe2S_fd_BS"/>
</dbReference>
<dbReference type="InterPro" id="IPR017896">
    <property type="entry name" value="4Fe4S_Fe-S-bd"/>
</dbReference>
<dbReference type="InterPro" id="IPR047683">
    <property type="entry name" value="BenC-like_FAD_NAD-bd"/>
</dbReference>
<dbReference type="InterPro" id="IPR012675">
    <property type="entry name" value="Beta-grasp_dom_sf"/>
</dbReference>
<dbReference type="InterPro" id="IPR008333">
    <property type="entry name" value="Cbr1-like_FAD-bd_dom"/>
</dbReference>
<dbReference type="InterPro" id="IPR017927">
    <property type="entry name" value="FAD-bd_FR_type"/>
</dbReference>
<dbReference type="InterPro" id="IPR001709">
    <property type="entry name" value="Flavoprot_Pyr_Nucl_cyt_Rdtase"/>
</dbReference>
<dbReference type="InterPro" id="IPR039261">
    <property type="entry name" value="FNR_nucleotide-bd"/>
</dbReference>
<dbReference type="InterPro" id="IPR050415">
    <property type="entry name" value="MRET"/>
</dbReference>
<dbReference type="InterPro" id="IPR001433">
    <property type="entry name" value="OxRdtase_FAD/NAD-bd"/>
</dbReference>
<dbReference type="InterPro" id="IPR017938">
    <property type="entry name" value="Riboflavin_synthase-like_b-brl"/>
</dbReference>
<dbReference type="NCBIfam" id="NF040810">
    <property type="entry name" value="BenC"/>
    <property type="match status" value="1"/>
</dbReference>
<dbReference type="PANTHER" id="PTHR47354">
    <property type="entry name" value="NADH OXIDOREDUCTASE HCR"/>
    <property type="match status" value="1"/>
</dbReference>
<dbReference type="PANTHER" id="PTHR47354:SF5">
    <property type="entry name" value="PROTEIN RFBI"/>
    <property type="match status" value="1"/>
</dbReference>
<dbReference type="Pfam" id="PF00970">
    <property type="entry name" value="FAD_binding_6"/>
    <property type="match status" value="1"/>
</dbReference>
<dbReference type="Pfam" id="PF00111">
    <property type="entry name" value="Fer2"/>
    <property type="match status" value="1"/>
</dbReference>
<dbReference type="Pfam" id="PF00175">
    <property type="entry name" value="NAD_binding_1"/>
    <property type="match status" value="1"/>
</dbReference>
<dbReference type="PRINTS" id="PR00371">
    <property type="entry name" value="FPNCR"/>
</dbReference>
<dbReference type="PRINTS" id="PR00410">
    <property type="entry name" value="PHEHYDRXLASE"/>
</dbReference>
<dbReference type="SUPFAM" id="SSF54292">
    <property type="entry name" value="2Fe-2S ferredoxin-like"/>
    <property type="match status" value="1"/>
</dbReference>
<dbReference type="SUPFAM" id="SSF52343">
    <property type="entry name" value="Ferredoxin reductase-like, C-terminal NADP-linked domain"/>
    <property type="match status" value="1"/>
</dbReference>
<dbReference type="SUPFAM" id="SSF63380">
    <property type="entry name" value="Riboflavin synthase domain-like"/>
    <property type="match status" value="1"/>
</dbReference>
<dbReference type="PROSITE" id="PS00197">
    <property type="entry name" value="2FE2S_FER_1"/>
    <property type="match status" value="1"/>
</dbReference>
<dbReference type="PROSITE" id="PS51085">
    <property type="entry name" value="2FE2S_FER_2"/>
    <property type="match status" value="1"/>
</dbReference>
<dbReference type="PROSITE" id="PS51384">
    <property type="entry name" value="FAD_FR"/>
    <property type="match status" value="1"/>
</dbReference>
<organism>
    <name type="scientific">Acinetobacter baylyi (strain ATCC 33305 / BD413 / ADP1)</name>
    <dbReference type="NCBI Taxonomy" id="62977"/>
    <lineage>
        <taxon>Bacteria</taxon>
        <taxon>Pseudomonadati</taxon>
        <taxon>Pseudomonadota</taxon>
        <taxon>Gammaproteobacteria</taxon>
        <taxon>Moraxellales</taxon>
        <taxon>Moraxellaceae</taxon>
        <taxon>Acinetobacter</taxon>
    </lineage>
</organism>